<accession>C4LA24</accession>
<gene>
    <name evidence="2" type="primary">ftsW</name>
    <name type="ordered locus">Tola_0524</name>
</gene>
<reference key="1">
    <citation type="submission" date="2009-05" db="EMBL/GenBank/DDBJ databases">
        <title>Complete sequence of Tolumonas auensis DSM 9187.</title>
        <authorList>
            <consortium name="US DOE Joint Genome Institute"/>
            <person name="Lucas S."/>
            <person name="Copeland A."/>
            <person name="Lapidus A."/>
            <person name="Glavina del Rio T."/>
            <person name="Tice H."/>
            <person name="Bruce D."/>
            <person name="Goodwin L."/>
            <person name="Pitluck S."/>
            <person name="Chertkov O."/>
            <person name="Brettin T."/>
            <person name="Detter J.C."/>
            <person name="Han C."/>
            <person name="Larimer F."/>
            <person name="Land M."/>
            <person name="Hauser L."/>
            <person name="Kyrpides N."/>
            <person name="Mikhailova N."/>
            <person name="Spring S."/>
            <person name="Beller H."/>
        </authorList>
    </citation>
    <scope>NUCLEOTIDE SEQUENCE [LARGE SCALE GENOMIC DNA]</scope>
    <source>
        <strain>DSM 9187 / NBRC 110442 / TA 4</strain>
    </source>
</reference>
<feature type="chain" id="PRO_0000415219" description="Probable peptidoglycan glycosyltransferase FtsW">
    <location>
        <begin position="1"/>
        <end position="384"/>
    </location>
</feature>
<feature type="topological domain" description="Cytoplasmic" evidence="1">
    <location>
        <begin position="1"/>
        <end position="19"/>
    </location>
</feature>
<feature type="transmembrane region" description="Helical" evidence="2">
    <location>
        <begin position="20"/>
        <end position="40"/>
    </location>
</feature>
<feature type="topological domain" description="Periplasmic" evidence="1">
    <location>
        <begin position="41"/>
        <end position="54"/>
    </location>
</feature>
<feature type="transmembrane region" description="Helical" evidence="2">
    <location>
        <begin position="55"/>
        <end position="75"/>
    </location>
</feature>
<feature type="topological domain" description="Cytoplasmic" evidence="1">
    <location>
        <begin position="76"/>
        <end position="83"/>
    </location>
</feature>
<feature type="transmembrane region" description="Helical" evidence="2">
    <location>
        <begin position="84"/>
        <end position="104"/>
    </location>
</feature>
<feature type="topological domain" description="Periplasmic" evidence="1">
    <location>
        <begin position="105"/>
        <end position="110"/>
    </location>
</feature>
<feature type="transmembrane region" description="Helical" evidence="2">
    <location>
        <begin position="111"/>
        <end position="131"/>
    </location>
</feature>
<feature type="topological domain" description="Cytoplasmic" evidence="1">
    <location>
        <begin position="132"/>
        <end position="143"/>
    </location>
</feature>
<feature type="transmembrane region" description="Helical" evidence="2">
    <location>
        <begin position="144"/>
        <end position="164"/>
    </location>
</feature>
<feature type="topological domain" description="Periplasmic" evidence="1">
    <location>
        <begin position="165"/>
        <end position="166"/>
    </location>
</feature>
<feature type="transmembrane region" description="Helical" evidence="2">
    <location>
        <begin position="167"/>
        <end position="187"/>
    </location>
</feature>
<feature type="topological domain" description="Cytoplasmic" evidence="1">
    <location>
        <position position="188"/>
    </location>
</feature>
<feature type="transmembrane region" description="Helical" evidence="2">
    <location>
        <begin position="189"/>
        <end position="209"/>
    </location>
</feature>
<feature type="topological domain" description="Periplasmic" evidence="1">
    <location>
        <begin position="210"/>
        <end position="267"/>
    </location>
</feature>
<feature type="transmembrane region" description="Helical" evidence="2">
    <location>
        <begin position="268"/>
        <end position="288"/>
    </location>
</feature>
<feature type="topological domain" description="Cytoplasmic" evidence="1">
    <location>
        <begin position="289"/>
        <end position="316"/>
    </location>
</feature>
<feature type="transmembrane region" description="Helical" evidence="2">
    <location>
        <begin position="317"/>
        <end position="337"/>
    </location>
</feature>
<feature type="topological domain" description="Periplasmic" evidence="1">
    <location>
        <begin position="338"/>
        <end position="343"/>
    </location>
</feature>
<feature type="transmembrane region" description="Helical" evidence="2">
    <location>
        <begin position="344"/>
        <end position="364"/>
    </location>
</feature>
<feature type="topological domain" description="Cytoplasmic" evidence="1">
    <location>
        <begin position="365"/>
        <end position="384"/>
    </location>
</feature>
<sequence>MAAVWRWFVPERPSFYDRGLLALTFSLMGIGLMMVASASIKEGPGGDMFYFTKRHLIFLFVCLGIGVGTLYLPLERWREWSGRLLVGALGLLFAVLAVGRTVNGAKRWIGFGFFNIQPAELAKLALIVFIASYLVRRSDEVRGNIAGFVKPLAVVFLLAIMLLAQPDLGSVVVLFVCTFGLLFIGGAKLVQFIAIIVAGLSALAGLIIYEPYRLRRVTSFLDPWADPFGSGYQLTQSLMAFGRGGFFGQGLGNSVQKLSYLPEAHTDFVFAILGEELGYFGVLVVLFLQLLLAMKALQIGRTALLRSKFFEGYMACGIGIWFSFQTVVNVGAAAGMLPTKGLTLPLVSYGGSSLIAITMAVAILLRIDFERRLDTSHVIQREAA</sequence>
<dbReference type="EC" id="2.4.99.28" evidence="2"/>
<dbReference type="EMBL" id="CP001616">
    <property type="protein sequence ID" value="ACQ92153.1"/>
    <property type="molecule type" value="Genomic_DNA"/>
</dbReference>
<dbReference type="RefSeq" id="WP_012728752.1">
    <property type="nucleotide sequence ID" value="NC_012691.1"/>
</dbReference>
<dbReference type="SMR" id="C4LA24"/>
<dbReference type="STRING" id="595494.Tola_0524"/>
<dbReference type="KEGG" id="tau:Tola_0524"/>
<dbReference type="eggNOG" id="COG0772">
    <property type="taxonomic scope" value="Bacteria"/>
</dbReference>
<dbReference type="HOGENOM" id="CLU_029243_1_1_6"/>
<dbReference type="OrthoDB" id="9768187at2"/>
<dbReference type="UniPathway" id="UPA00219"/>
<dbReference type="Proteomes" id="UP000009073">
    <property type="component" value="Chromosome"/>
</dbReference>
<dbReference type="GO" id="GO:0032153">
    <property type="term" value="C:cell division site"/>
    <property type="evidence" value="ECO:0007669"/>
    <property type="project" value="UniProtKB-UniRule"/>
</dbReference>
<dbReference type="GO" id="GO:0005886">
    <property type="term" value="C:plasma membrane"/>
    <property type="evidence" value="ECO:0007669"/>
    <property type="project" value="UniProtKB-SubCell"/>
</dbReference>
<dbReference type="GO" id="GO:0015648">
    <property type="term" value="F:lipid-linked peptidoglycan transporter activity"/>
    <property type="evidence" value="ECO:0007669"/>
    <property type="project" value="TreeGrafter"/>
</dbReference>
<dbReference type="GO" id="GO:0008955">
    <property type="term" value="F:peptidoglycan glycosyltransferase activity"/>
    <property type="evidence" value="ECO:0007669"/>
    <property type="project" value="UniProtKB-UniRule"/>
</dbReference>
<dbReference type="GO" id="GO:0071555">
    <property type="term" value="P:cell wall organization"/>
    <property type="evidence" value="ECO:0007669"/>
    <property type="project" value="UniProtKB-KW"/>
</dbReference>
<dbReference type="GO" id="GO:0043093">
    <property type="term" value="P:FtsZ-dependent cytokinesis"/>
    <property type="evidence" value="ECO:0007669"/>
    <property type="project" value="UniProtKB-UniRule"/>
</dbReference>
<dbReference type="GO" id="GO:0009252">
    <property type="term" value="P:peptidoglycan biosynthetic process"/>
    <property type="evidence" value="ECO:0007669"/>
    <property type="project" value="UniProtKB-UniRule"/>
</dbReference>
<dbReference type="GO" id="GO:0008360">
    <property type="term" value="P:regulation of cell shape"/>
    <property type="evidence" value="ECO:0007669"/>
    <property type="project" value="UniProtKB-KW"/>
</dbReference>
<dbReference type="HAMAP" id="MF_00913">
    <property type="entry name" value="PGT_FtsW_proteobact"/>
    <property type="match status" value="1"/>
</dbReference>
<dbReference type="InterPro" id="IPR018365">
    <property type="entry name" value="Cell_cycle_FtsW-rel_CS"/>
</dbReference>
<dbReference type="InterPro" id="IPR013437">
    <property type="entry name" value="FtsW"/>
</dbReference>
<dbReference type="InterPro" id="IPR001182">
    <property type="entry name" value="FtsW/RodA"/>
</dbReference>
<dbReference type="NCBIfam" id="TIGR02614">
    <property type="entry name" value="ftsW"/>
    <property type="match status" value="1"/>
</dbReference>
<dbReference type="NCBIfam" id="NF008042">
    <property type="entry name" value="PRK10774.1"/>
    <property type="match status" value="1"/>
</dbReference>
<dbReference type="PANTHER" id="PTHR30474">
    <property type="entry name" value="CELL CYCLE PROTEIN"/>
    <property type="match status" value="1"/>
</dbReference>
<dbReference type="PANTHER" id="PTHR30474:SF2">
    <property type="entry name" value="PEPTIDOGLYCAN GLYCOSYLTRANSFERASE FTSW-RELATED"/>
    <property type="match status" value="1"/>
</dbReference>
<dbReference type="Pfam" id="PF01098">
    <property type="entry name" value="FTSW_RODA_SPOVE"/>
    <property type="match status" value="1"/>
</dbReference>
<dbReference type="PROSITE" id="PS00428">
    <property type="entry name" value="FTSW_RODA_SPOVE"/>
    <property type="match status" value="1"/>
</dbReference>
<protein>
    <recommendedName>
        <fullName evidence="2">Probable peptidoglycan glycosyltransferase FtsW</fullName>
        <shortName evidence="2">PGT</shortName>
        <ecNumber evidence="2">2.4.99.28</ecNumber>
    </recommendedName>
    <alternativeName>
        <fullName evidence="2">Cell division protein FtsW</fullName>
    </alternativeName>
    <alternativeName>
        <fullName evidence="2">Cell wall polymerase</fullName>
    </alternativeName>
    <alternativeName>
        <fullName evidence="2">Peptidoglycan polymerase</fullName>
        <shortName evidence="2">PG polymerase</shortName>
    </alternativeName>
</protein>
<organism>
    <name type="scientific">Tolumonas auensis (strain DSM 9187 / NBRC 110442 / TA 4)</name>
    <dbReference type="NCBI Taxonomy" id="595494"/>
    <lineage>
        <taxon>Bacteria</taxon>
        <taxon>Pseudomonadati</taxon>
        <taxon>Pseudomonadota</taxon>
        <taxon>Gammaproteobacteria</taxon>
        <taxon>Aeromonadales</taxon>
        <taxon>Aeromonadaceae</taxon>
        <taxon>Tolumonas</taxon>
    </lineage>
</organism>
<comment type="function">
    <text evidence="2">Peptidoglycan polymerase that is essential for cell division.</text>
</comment>
<comment type="catalytic activity">
    <reaction evidence="2">
        <text>[GlcNAc-(1-&gt;4)-Mur2Ac(oyl-L-Ala-gamma-D-Glu-L-Lys-D-Ala-D-Ala)](n)-di-trans,octa-cis-undecaprenyl diphosphate + beta-D-GlcNAc-(1-&gt;4)-Mur2Ac(oyl-L-Ala-gamma-D-Glu-L-Lys-D-Ala-D-Ala)-di-trans,octa-cis-undecaprenyl diphosphate = [GlcNAc-(1-&gt;4)-Mur2Ac(oyl-L-Ala-gamma-D-Glu-L-Lys-D-Ala-D-Ala)](n+1)-di-trans,octa-cis-undecaprenyl diphosphate + di-trans,octa-cis-undecaprenyl diphosphate + H(+)</text>
        <dbReference type="Rhea" id="RHEA:23708"/>
        <dbReference type="Rhea" id="RHEA-COMP:9602"/>
        <dbReference type="Rhea" id="RHEA-COMP:9603"/>
        <dbReference type="ChEBI" id="CHEBI:15378"/>
        <dbReference type="ChEBI" id="CHEBI:58405"/>
        <dbReference type="ChEBI" id="CHEBI:60033"/>
        <dbReference type="ChEBI" id="CHEBI:78435"/>
        <dbReference type="EC" id="2.4.99.28"/>
    </reaction>
</comment>
<comment type="pathway">
    <text evidence="2">Cell wall biogenesis; peptidoglycan biosynthesis.</text>
</comment>
<comment type="subcellular location">
    <subcellularLocation>
        <location evidence="2">Cell inner membrane</location>
        <topology evidence="2">Multi-pass membrane protein</topology>
    </subcellularLocation>
    <text evidence="2">Localizes to the division septum.</text>
</comment>
<comment type="similarity">
    <text evidence="2">Belongs to the SEDS family. FtsW subfamily.</text>
</comment>
<evidence type="ECO:0000255" key="1"/>
<evidence type="ECO:0000255" key="2">
    <source>
        <dbReference type="HAMAP-Rule" id="MF_00913"/>
    </source>
</evidence>
<name>FTSW_TOLAT</name>
<proteinExistence type="inferred from homology"/>
<keyword id="KW-0131">Cell cycle</keyword>
<keyword id="KW-0132">Cell division</keyword>
<keyword id="KW-0997">Cell inner membrane</keyword>
<keyword id="KW-1003">Cell membrane</keyword>
<keyword id="KW-0133">Cell shape</keyword>
<keyword id="KW-0961">Cell wall biogenesis/degradation</keyword>
<keyword id="KW-0328">Glycosyltransferase</keyword>
<keyword id="KW-0472">Membrane</keyword>
<keyword id="KW-0573">Peptidoglycan synthesis</keyword>
<keyword id="KW-1185">Reference proteome</keyword>
<keyword id="KW-0808">Transferase</keyword>
<keyword id="KW-0812">Transmembrane</keyword>
<keyword id="KW-1133">Transmembrane helix</keyword>